<feature type="chain" id="PRO_0000393737" description="GDP-mannose-dependent alpha-(1-6)-phosphatidylinositol dimannoside mannosyltransferase">
    <location>
        <begin position="1"/>
        <end position="381"/>
    </location>
</feature>
<feature type="binding site" evidence="1">
    <location>
        <position position="16"/>
    </location>
    <ligand>
        <name>substrate</name>
    </ligand>
</feature>
<feature type="binding site" evidence="1">
    <location>
        <position position="207"/>
    </location>
    <ligand>
        <name>substrate</name>
    </ligand>
</feature>
<feature type="binding site" evidence="1">
    <location>
        <begin position="211"/>
        <end position="212"/>
    </location>
    <ligand>
        <name>substrate</name>
    </ligand>
</feature>
<feature type="binding site" evidence="1">
    <location>
        <begin position="283"/>
        <end position="287"/>
    </location>
    <ligand>
        <name>substrate</name>
    </ligand>
</feature>
<feature type="binding site" evidence="1">
    <location>
        <position position="291"/>
    </location>
    <ligand>
        <name>substrate</name>
    </ligand>
</feature>
<feature type="site" description="Important for catalytic activity" evidence="1">
    <location>
        <position position="283"/>
    </location>
</feature>
<sequence length="381" mass="41289">MRVVQVANFYGPRSGGLRTAVDRLGAEYCASGHEVFLIVPGARTERHLLRTGVVRITLPAKHIPYTGGYRAVMPGAVRTVLETLRPDALEVSDRLTLRSLGRWGREHGVTTVMISHERLDRFAGQLLPRRAAQKFADFANARTAANYDTVVCTTGFAREEFDRIGATNTVTVPLGVDLKTFHPRRRCARVRQHWATPTQILLVHCGRLSVEKHADRSIDALAALCDAGVDARLVIAGEGPLRARLERKATGLPIDFTGFISDRHAVAGLLASADVALAPGPHETFGLAALESLACGTPAVVSRTSALTEIITADSGACADNRPEAIAHAVRTIVSRPERHRRRCARRRAEIFTWQRAAASMLATLGAMAVSTRCGDTQDTA</sequence>
<gene>
    <name type="primary">pimC</name>
    <name type="ordered locus">MRA_1768.2</name>
    <name type="ORF">MRA_1768B</name>
</gene>
<protein>
    <recommendedName>
        <fullName>GDP-mannose-dependent alpha-(1-6)-phosphatidylinositol dimannoside mannosyltransferase</fullName>
        <ecNumber>2.4.1.-</ecNumber>
    </recommendedName>
    <alternativeName>
        <fullName>Alpha-D-mannose-alpha-(1-6)-phosphatidylmyo-inositol-mannosyltransferase</fullName>
    </alternativeName>
    <alternativeName>
        <fullName>Guanosine diphosphomannose-phosphatidyl-inositol alpha-mannosyltransferase</fullName>
    </alternativeName>
    <alternativeName>
        <fullName>Phosphatidylinositol alpha-mannosyltransferase</fullName>
        <shortName>PI alpha-mannosyltransferase</shortName>
    </alternativeName>
</protein>
<organism>
    <name type="scientific">Mycobacterium tuberculosis (strain ATCC 25177 / H37Ra)</name>
    <dbReference type="NCBI Taxonomy" id="419947"/>
    <lineage>
        <taxon>Bacteria</taxon>
        <taxon>Bacillati</taxon>
        <taxon>Actinomycetota</taxon>
        <taxon>Actinomycetes</taxon>
        <taxon>Mycobacteriales</taxon>
        <taxon>Mycobacteriaceae</taxon>
        <taxon>Mycobacterium</taxon>
        <taxon>Mycobacterium tuberculosis complex</taxon>
    </lineage>
</organism>
<dbReference type="EC" id="2.4.1.-"/>
<dbReference type="EMBL" id="AJ242907">
    <property type="protein sequence ID" value="CAB60070.1"/>
    <property type="molecule type" value="Genomic_DNA"/>
</dbReference>
<dbReference type="EMBL" id="CP000611">
    <property type="protein sequence ID" value="ABQ73519.1"/>
    <property type="molecule type" value="Genomic_DNA"/>
</dbReference>
<dbReference type="RefSeq" id="WP_003899004.1">
    <property type="nucleotide sequence ID" value="NZ_CP016972.1"/>
</dbReference>
<dbReference type="SMR" id="A5U3B9"/>
<dbReference type="CAZy" id="GT4">
    <property type="family name" value="Glycosyltransferase Family 4"/>
</dbReference>
<dbReference type="KEGG" id="mra:MRA_1768B"/>
<dbReference type="eggNOG" id="COG0438">
    <property type="taxonomic scope" value="Bacteria"/>
</dbReference>
<dbReference type="HOGENOM" id="CLU_009583_10_1_11"/>
<dbReference type="UniPathway" id="UPA00949"/>
<dbReference type="Proteomes" id="UP000001988">
    <property type="component" value="Chromosome"/>
</dbReference>
<dbReference type="GO" id="GO:0016020">
    <property type="term" value="C:membrane"/>
    <property type="evidence" value="ECO:0007669"/>
    <property type="project" value="GOC"/>
</dbReference>
<dbReference type="GO" id="GO:0033164">
    <property type="term" value="F:glycolipid 1,6-alpha-mannosyltransferase activity"/>
    <property type="evidence" value="ECO:0000250"/>
    <property type="project" value="UniProtKB"/>
</dbReference>
<dbReference type="GO" id="GO:0043750">
    <property type="term" value="F:phosphatidylinositol alpha-mannosyltransferase activity"/>
    <property type="evidence" value="ECO:0000250"/>
    <property type="project" value="UniProtKB"/>
</dbReference>
<dbReference type="GO" id="GO:0009247">
    <property type="term" value="P:glycolipid biosynthetic process"/>
    <property type="evidence" value="ECO:0000250"/>
    <property type="project" value="UniProtKB"/>
</dbReference>
<dbReference type="GO" id="GO:0046488">
    <property type="term" value="P:phosphatidylinositol metabolic process"/>
    <property type="evidence" value="ECO:0007669"/>
    <property type="project" value="UniProtKB-UniPathway"/>
</dbReference>
<dbReference type="GO" id="GO:0008654">
    <property type="term" value="P:phospholipid biosynthetic process"/>
    <property type="evidence" value="ECO:0007669"/>
    <property type="project" value="UniProtKB-KW"/>
</dbReference>
<dbReference type="Gene3D" id="3.40.50.2000">
    <property type="entry name" value="Glycogen Phosphorylase B"/>
    <property type="match status" value="2"/>
</dbReference>
<dbReference type="InterPro" id="IPR001296">
    <property type="entry name" value="Glyco_trans_1"/>
</dbReference>
<dbReference type="InterPro" id="IPR028098">
    <property type="entry name" value="Glyco_trans_4-like_N"/>
</dbReference>
<dbReference type="InterPro" id="IPR050194">
    <property type="entry name" value="Glycosyltransferase_grp1"/>
</dbReference>
<dbReference type="PANTHER" id="PTHR45947">
    <property type="entry name" value="SULFOQUINOVOSYL TRANSFERASE SQD2"/>
    <property type="match status" value="1"/>
</dbReference>
<dbReference type="PANTHER" id="PTHR45947:SF3">
    <property type="entry name" value="SULFOQUINOVOSYL TRANSFERASE SQD2"/>
    <property type="match status" value="1"/>
</dbReference>
<dbReference type="Pfam" id="PF13579">
    <property type="entry name" value="Glyco_trans_4_4"/>
    <property type="match status" value="1"/>
</dbReference>
<dbReference type="Pfam" id="PF00534">
    <property type="entry name" value="Glycos_transf_1"/>
    <property type="match status" value="1"/>
</dbReference>
<dbReference type="SUPFAM" id="SSF53756">
    <property type="entry name" value="UDP-Glycosyltransferase/glycogen phosphorylase"/>
    <property type="match status" value="1"/>
</dbReference>
<comment type="function">
    <text evidence="1">Catalyzes the addition of a mannose residue from GDP-D-mannose to the position 6 of the alpha-1,6-linked mannose residue of the triacyl phosphatidylinositol dimannoside (Ac3PIM2) to generate triacyl phosphatidylinositol trimannoside (Ac3PIM3).</text>
</comment>
<comment type="pathway">
    <text>Phospholipid metabolism; phosphatidylinositol metabolism.</text>
</comment>
<comment type="similarity">
    <text evidence="2">Belongs to the glycosyltransferase group 1 family. Glycosyltransferase 4 subfamily.</text>
</comment>
<proteinExistence type="inferred from homology"/>
<reference key="1">
    <citation type="journal article" date="1999" name="Infect. Immun.">
        <title>Genomic analysis reveals variation between Mycobacterium tuberculosis H37Rv and the attenuated M. tuberculosis H37Ra.</title>
        <authorList>
            <person name="Brosch R."/>
            <person name="Philipp W."/>
            <person name="Stavropoulos E."/>
            <person name="Colston M.J."/>
            <person name="Cole S.T."/>
            <person name="Gordon S.V."/>
        </authorList>
    </citation>
    <scope>NUCLEOTIDE SEQUENCE [GENOMIC DNA]</scope>
    <scope>IDENTIFICATION</scope>
</reference>
<reference key="2">
    <citation type="journal article" date="2008" name="PLoS ONE">
        <title>Genetic basis of virulence attenuation revealed by comparative genomic analysis of Mycobacterium tuberculosis strain H37Ra versus H37Rv.</title>
        <authorList>
            <person name="Zheng H."/>
            <person name="Lu L."/>
            <person name="Wang B."/>
            <person name="Pu S."/>
            <person name="Zhang X."/>
            <person name="Zhu G."/>
            <person name="Shi W."/>
            <person name="Zhang L."/>
            <person name="Wang H."/>
            <person name="Wang S."/>
            <person name="Zhao G."/>
            <person name="Zhang Y."/>
        </authorList>
    </citation>
    <scope>NUCLEOTIDE SEQUENCE [LARGE SCALE GENOMIC DNA]</scope>
    <source>
        <strain>ATCC 25177 / H37Ra</strain>
    </source>
</reference>
<keyword id="KW-0328">Glycosyltransferase</keyword>
<keyword id="KW-0444">Lipid biosynthesis</keyword>
<keyword id="KW-0443">Lipid metabolism</keyword>
<keyword id="KW-0594">Phospholipid biosynthesis</keyword>
<keyword id="KW-1208">Phospholipid metabolism</keyword>
<keyword id="KW-1185">Reference proteome</keyword>
<keyword id="KW-0808">Transferase</keyword>
<name>PIMC_MYCTA</name>
<accession>A5U3B9</accession>
<accession>Q7D807</accession>
<accession>Q9RLP4</accession>
<evidence type="ECO:0000250" key="1"/>
<evidence type="ECO:0000305" key="2"/>